<proteinExistence type="evidence at protein level"/>
<dbReference type="EMBL" id="DQ663541">
    <property type="protein sequence ID" value="ABG81294.1"/>
    <property type="molecule type" value="mRNA"/>
</dbReference>
<dbReference type="SMR" id="A4KA37"/>
<dbReference type="Allergome" id="553">
    <property type="allergen name" value="Phl p 12"/>
</dbReference>
<dbReference type="GO" id="GO:0005938">
    <property type="term" value="C:cell cortex"/>
    <property type="evidence" value="ECO:0007669"/>
    <property type="project" value="TreeGrafter"/>
</dbReference>
<dbReference type="GO" id="GO:0005856">
    <property type="term" value="C:cytoskeleton"/>
    <property type="evidence" value="ECO:0007669"/>
    <property type="project" value="UniProtKB-SubCell"/>
</dbReference>
<dbReference type="GO" id="GO:0003785">
    <property type="term" value="F:actin monomer binding"/>
    <property type="evidence" value="ECO:0007669"/>
    <property type="project" value="TreeGrafter"/>
</dbReference>
<dbReference type="CDD" id="cd00148">
    <property type="entry name" value="PROF"/>
    <property type="match status" value="1"/>
</dbReference>
<dbReference type="FunFam" id="3.30.450.30:FF:000001">
    <property type="entry name" value="Profilin"/>
    <property type="match status" value="1"/>
</dbReference>
<dbReference type="Gene3D" id="3.30.450.30">
    <property type="entry name" value="Dynein light chain 2a, cytoplasmic"/>
    <property type="match status" value="1"/>
</dbReference>
<dbReference type="InterPro" id="IPR048278">
    <property type="entry name" value="PFN"/>
</dbReference>
<dbReference type="InterPro" id="IPR005455">
    <property type="entry name" value="PFN_euk"/>
</dbReference>
<dbReference type="InterPro" id="IPR036140">
    <property type="entry name" value="PFN_sf"/>
</dbReference>
<dbReference type="InterPro" id="IPR027310">
    <property type="entry name" value="Profilin_CS"/>
</dbReference>
<dbReference type="PANTHER" id="PTHR11604">
    <property type="entry name" value="PROFILIN"/>
    <property type="match status" value="1"/>
</dbReference>
<dbReference type="PANTHER" id="PTHR11604:SF31">
    <property type="entry name" value="PROFILIN"/>
    <property type="match status" value="1"/>
</dbReference>
<dbReference type="Pfam" id="PF00235">
    <property type="entry name" value="Profilin"/>
    <property type="match status" value="1"/>
</dbReference>
<dbReference type="PRINTS" id="PR00392">
    <property type="entry name" value="PROFILIN"/>
</dbReference>
<dbReference type="PRINTS" id="PR01640">
    <property type="entry name" value="PROFILINPLNT"/>
</dbReference>
<dbReference type="SMART" id="SM00392">
    <property type="entry name" value="PROF"/>
    <property type="match status" value="1"/>
</dbReference>
<dbReference type="SUPFAM" id="SSF55770">
    <property type="entry name" value="Profilin (actin-binding protein)"/>
    <property type="match status" value="1"/>
</dbReference>
<dbReference type="PROSITE" id="PS00414">
    <property type="entry name" value="PROFILIN"/>
    <property type="match status" value="1"/>
</dbReference>
<accession>A4KA37</accession>
<sequence>MSWQAYVDEHLMCEIEGHHLASAAILGHDGTVWAQSADFPQFKPEEITGIMKDFDEPGHLAPTGMFVAAAKYMVIQGEPGAVTRGKKGAGGITIKKTGQALVVGIYDEPMTPGQCNMVVERLGDYLVKQGL</sequence>
<name>PROF9_PHLPR</name>
<reference key="1">
    <citation type="journal article" date="2012" name="PLoS ONE">
        <title>Characterization of profilin polymorphism in pollen with a focus on multifunctionality.</title>
        <authorList>
            <person name="Jimenez-Lopez J.C."/>
            <person name="Morales S."/>
            <person name="Castro A.J."/>
            <person name="Volkmann D."/>
            <person name="Rodriguez-Garcia M.I."/>
            <person name="Alche Jde D."/>
        </authorList>
    </citation>
    <scope>NUCLEOTIDE SEQUENCE [MRNA]</scope>
    <scope>POLYMORPHISM</scope>
    <source>
        <strain>cv. Pratense</strain>
    </source>
</reference>
<reference key="2">
    <citation type="journal article" date="2013" name="PLoS ONE">
        <title>Analysis of the effects of polymorphism on pollen profilin structural functionality and the generation of conformational, T- and B-cell epitopes.</title>
        <authorList>
            <person name="Jimenez-Lopez J.C."/>
            <person name="Rodriguez-Garcia M.I."/>
            <person name="Alche J.D."/>
        </authorList>
    </citation>
    <scope>3D-STRUCTURE MODELING</scope>
    <scope>DISULFIDE BOND</scope>
</reference>
<comment type="function">
    <text evidence="1">Binds to actin and affects the structure of the cytoskeleton. At high concentrations, profilin prevents the polymerization of actin, whereas it enhances it at low concentrations (By similarity).</text>
</comment>
<comment type="subunit">
    <text evidence="1">Occurs in many kinds of cells as a complex with monomeric actin in a 1:1 ratio.</text>
</comment>
<comment type="subcellular location">
    <subcellularLocation>
        <location evidence="1">Cytoplasm</location>
        <location evidence="1">Cytoskeleton</location>
    </subcellularLocation>
</comment>
<comment type="PTM">
    <text evidence="1">Phosphorylated by MAP kinases.</text>
</comment>
<comment type="polymorphism">
    <text>Several isoforms of the allergen exist due to polymorphism.</text>
</comment>
<comment type="allergen">
    <text>Causes an allergic reaction in human.</text>
</comment>
<comment type="miscellaneous">
    <text evidence="3">The variability of the residues taking part of IgE-binding epitopes might be responsible of the difference in cross-reactivity among olive pollen cultivars, and between distantly related pollen species, leading to a variable range of allergy reactions among atopic patients.</text>
</comment>
<comment type="similarity">
    <text evidence="2">Belongs to the profilin family.</text>
</comment>
<organism>
    <name type="scientific">Phleum pratense</name>
    <name type="common">Common timothy</name>
    <dbReference type="NCBI Taxonomy" id="15957"/>
    <lineage>
        <taxon>Eukaryota</taxon>
        <taxon>Viridiplantae</taxon>
        <taxon>Streptophyta</taxon>
        <taxon>Embryophyta</taxon>
        <taxon>Tracheophyta</taxon>
        <taxon>Spermatophyta</taxon>
        <taxon>Magnoliopsida</taxon>
        <taxon>Liliopsida</taxon>
        <taxon>Poales</taxon>
        <taxon>Poaceae</taxon>
        <taxon>BOP clade</taxon>
        <taxon>Pooideae</taxon>
        <taxon>Poodae</taxon>
        <taxon>Poeae</taxon>
        <taxon>Poeae Chloroplast Group 2 (Poeae type)</taxon>
        <taxon>Poodinae</taxon>
        <taxon>Phleinae</taxon>
        <taxon>Phleum</taxon>
    </lineage>
</organism>
<evidence type="ECO:0000250" key="1"/>
<evidence type="ECO:0000305" key="2"/>
<evidence type="ECO:0000305" key="3">
    <source>
    </source>
</evidence>
<feature type="initiator methionine" description="Removed" evidence="1">
    <location>
        <position position="1"/>
    </location>
</feature>
<feature type="chain" id="PRO_0000425063" description="Profilin-9">
    <location>
        <begin position="2"/>
        <end position="131"/>
    </location>
</feature>
<feature type="short sequence motif" description="Involved in PIP2 interaction">
    <location>
        <begin position="81"/>
        <end position="97"/>
    </location>
</feature>
<feature type="modified residue" description="Phosphothreonine" evidence="1">
    <location>
        <position position="111"/>
    </location>
</feature>
<feature type="disulfide bond" evidence="3">
    <location>
        <begin position="13"/>
        <end position="115"/>
    </location>
</feature>
<keyword id="KW-0009">Actin-binding</keyword>
<keyword id="KW-0020">Allergen</keyword>
<keyword id="KW-0963">Cytoplasm</keyword>
<keyword id="KW-0206">Cytoskeleton</keyword>
<keyword id="KW-1015">Disulfide bond</keyword>
<keyword id="KW-0597">Phosphoprotein</keyword>
<protein>
    <recommendedName>
        <fullName>Profilin-9</fullName>
    </recommendedName>
    <alternativeName>
        <fullName>Pollen allergen Phl p 12</fullName>
    </alternativeName>
    <alternativeName>
        <fullName>pollen profilin variant 7</fullName>
    </alternativeName>
    <allergenName>Phl p 12</allergenName>
</protein>